<keyword id="KW-0002">3D-structure</keyword>
<keyword id="KW-0963">Cytoplasm</keyword>
<keyword id="KW-0206">Cytoskeleton</keyword>
<keyword id="KW-0493">Microtubule</keyword>
<keyword id="KW-0539">Nucleus</keyword>
<keyword id="KW-1185">Reference proteome</keyword>
<evidence type="ECO:0000250" key="1">
    <source>
        <dbReference type="UniProtKB" id="P34420"/>
    </source>
</evidence>
<evidence type="ECO:0000256" key="2">
    <source>
        <dbReference type="SAM" id="MobiDB-lite"/>
    </source>
</evidence>
<evidence type="ECO:0000269" key="3">
    <source>
    </source>
</evidence>
<evidence type="ECO:0000305" key="4"/>
<evidence type="ECO:0007829" key="5">
    <source>
        <dbReference type="PDB" id="9ESI"/>
    </source>
</evidence>
<organism>
    <name type="scientific">Schizosaccharomyces pombe (strain 972 / ATCC 24843)</name>
    <name type="common">Fission yeast</name>
    <dbReference type="NCBI Taxonomy" id="284812"/>
    <lineage>
        <taxon>Eukaryota</taxon>
        <taxon>Fungi</taxon>
        <taxon>Dikarya</taxon>
        <taxon>Ascomycota</taxon>
        <taxon>Taphrinomycotina</taxon>
        <taxon>Schizosaccharomycetes</taxon>
        <taxon>Schizosaccharomycetales</taxon>
        <taxon>Schizosaccharomycetaceae</taxon>
        <taxon>Schizosaccharomyces</taxon>
    </lineage>
</organism>
<sequence>MSLAKKIDDDEKQLVKPVNKEQTYKKPIPLEEDDYIEGLSYIIQQQYFPDLPKLKAEVVLESEEVGSFDAQNESRDEKLKYLIAKNSEDPLRKRLPSLAIHEITKAQLDGENKPISVASYQNKFTSEDNASFGELMEDESRLRAEQHKRRFGVHSQQPSNSIQTIGYSNSDAIKSIAWKEKDKSIKTWNYQPKNALMYTPETNHSSSLSQIKKQSTEIQADATGLSQSFLEAANQPSTDPIVPPSVNETDASVNGYPLVDVNFGQAVGSSSKSYFNIPERPRRERLHAMRVRDIRSHSTNTTITSVDSASTALNSYSTPNSVSRKLTNLTPAARRLVARSYLRSPLHGSSPSASRHTALRTSIPKFSWTPTPRVKSTAPTPKRV</sequence>
<protein>
    <recommendedName>
        <fullName>Stress response protein bis1</fullName>
    </recommendedName>
    <alternativeName>
        <fullName>Splicing factor ESS-2 homolog</fullName>
    </alternativeName>
</protein>
<reference key="1">
    <citation type="journal article" date="2002" name="Nature">
        <title>The genome sequence of Schizosaccharomyces pombe.</title>
        <authorList>
            <person name="Wood V."/>
            <person name="Gwilliam R."/>
            <person name="Rajandream M.A."/>
            <person name="Lyne M.H."/>
            <person name="Lyne R."/>
            <person name="Stewart A."/>
            <person name="Sgouros J.G."/>
            <person name="Peat N."/>
            <person name="Hayles J."/>
            <person name="Baker S.G."/>
            <person name="Basham D."/>
            <person name="Bowman S."/>
            <person name="Brooks K."/>
            <person name="Brown D."/>
            <person name="Brown S."/>
            <person name="Chillingworth T."/>
            <person name="Churcher C.M."/>
            <person name="Collins M."/>
            <person name="Connor R."/>
            <person name="Cronin A."/>
            <person name="Davis P."/>
            <person name="Feltwell T."/>
            <person name="Fraser A."/>
            <person name="Gentles S."/>
            <person name="Goble A."/>
            <person name="Hamlin N."/>
            <person name="Harris D.E."/>
            <person name="Hidalgo J."/>
            <person name="Hodgson G."/>
            <person name="Holroyd S."/>
            <person name="Hornsby T."/>
            <person name="Howarth S."/>
            <person name="Huckle E.J."/>
            <person name="Hunt S."/>
            <person name="Jagels K."/>
            <person name="James K.D."/>
            <person name="Jones L."/>
            <person name="Jones M."/>
            <person name="Leather S."/>
            <person name="McDonald S."/>
            <person name="McLean J."/>
            <person name="Mooney P."/>
            <person name="Moule S."/>
            <person name="Mungall K.L."/>
            <person name="Murphy L.D."/>
            <person name="Niblett D."/>
            <person name="Odell C."/>
            <person name="Oliver K."/>
            <person name="O'Neil S."/>
            <person name="Pearson D."/>
            <person name="Quail M.A."/>
            <person name="Rabbinowitsch E."/>
            <person name="Rutherford K.M."/>
            <person name="Rutter S."/>
            <person name="Saunders D."/>
            <person name="Seeger K."/>
            <person name="Sharp S."/>
            <person name="Skelton J."/>
            <person name="Simmonds M.N."/>
            <person name="Squares R."/>
            <person name="Squares S."/>
            <person name="Stevens K."/>
            <person name="Taylor K."/>
            <person name="Taylor R.G."/>
            <person name="Tivey A."/>
            <person name="Walsh S.V."/>
            <person name="Warren T."/>
            <person name="Whitehead S."/>
            <person name="Woodward J.R."/>
            <person name="Volckaert G."/>
            <person name="Aert R."/>
            <person name="Robben J."/>
            <person name="Grymonprez B."/>
            <person name="Weltjens I."/>
            <person name="Vanstreels E."/>
            <person name="Rieger M."/>
            <person name="Schaefer M."/>
            <person name="Mueller-Auer S."/>
            <person name="Gabel C."/>
            <person name="Fuchs M."/>
            <person name="Duesterhoeft A."/>
            <person name="Fritzc C."/>
            <person name="Holzer E."/>
            <person name="Moestl D."/>
            <person name="Hilbert H."/>
            <person name="Borzym K."/>
            <person name="Langer I."/>
            <person name="Beck A."/>
            <person name="Lehrach H."/>
            <person name="Reinhardt R."/>
            <person name="Pohl T.M."/>
            <person name="Eger P."/>
            <person name="Zimmermann W."/>
            <person name="Wedler H."/>
            <person name="Wambutt R."/>
            <person name="Purnelle B."/>
            <person name="Goffeau A."/>
            <person name="Cadieu E."/>
            <person name="Dreano S."/>
            <person name="Gloux S."/>
            <person name="Lelaure V."/>
            <person name="Mottier S."/>
            <person name="Galibert F."/>
            <person name="Aves S.J."/>
            <person name="Xiang Z."/>
            <person name="Hunt C."/>
            <person name="Moore K."/>
            <person name="Hurst S.M."/>
            <person name="Lucas M."/>
            <person name="Rochet M."/>
            <person name="Gaillardin C."/>
            <person name="Tallada V.A."/>
            <person name="Garzon A."/>
            <person name="Thode G."/>
            <person name="Daga R.R."/>
            <person name="Cruzado L."/>
            <person name="Jimenez J."/>
            <person name="Sanchez M."/>
            <person name="del Rey F."/>
            <person name="Benito J."/>
            <person name="Dominguez A."/>
            <person name="Revuelta J.L."/>
            <person name="Moreno S."/>
            <person name="Armstrong J."/>
            <person name="Forsburg S.L."/>
            <person name="Cerutti L."/>
            <person name="Lowe T."/>
            <person name="McCombie W.R."/>
            <person name="Paulsen I."/>
            <person name="Potashkin J."/>
            <person name="Shpakovski G.V."/>
            <person name="Ussery D."/>
            <person name="Barrell B.G."/>
            <person name="Nurse P."/>
        </authorList>
    </citation>
    <scope>NUCLEOTIDE SEQUENCE [LARGE SCALE GENOMIC DNA]</scope>
    <source>
        <strain>972 / ATCC 24843</strain>
    </source>
</reference>
<reference key="2">
    <citation type="journal article" date="2002" name="J. Biol. Chem.">
        <title>The fission yeast ES2 homologue, Bis1, interacts with the Ish1 stress-responsive nuclear envelope protein.</title>
        <authorList>
            <person name="Taricani L."/>
            <person name="Tejada M.L."/>
            <person name="Young P.G."/>
        </authorList>
    </citation>
    <scope>FUNCTION</scope>
    <scope>INTERACTION WITH ISH1</scope>
    <scope>SUBCELLULAR LOCATION</scope>
</reference>
<feature type="chain" id="PRO_0000064936" description="Stress response protein bis1">
    <location>
        <begin position="1"/>
        <end position="384"/>
    </location>
</feature>
<feature type="region of interest" description="Disordered" evidence="2">
    <location>
        <begin position="1"/>
        <end position="22"/>
    </location>
</feature>
<feature type="region of interest" description="Disordered" evidence="2">
    <location>
        <begin position="344"/>
        <end position="384"/>
    </location>
</feature>
<feature type="helix" evidence="5">
    <location>
        <begin position="32"/>
        <end position="47"/>
    </location>
</feature>
<feature type="helix" evidence="5">
    <location>
        <begin position="51"/>
        <end position="59"/>
    </location>
</feature>
<feature type="helix" evidence="5">
    <location>
        <begin position="99"/>
        <end position="107"/>
    </location>
</feature>
<feature type="strand" evidence="5">
    <location>
        <begin position="109"/>
        <end position="111"/>
    </location>
</feature>
<feature type="helix" evidence="5">
    <location>
        <begin position="117"/>
        <end position="123"/>
    </location>
</feature>
<feature type="helix" evidence="5">
    <location>
        <begin position="128"/>
        <end position="150"/>
    </location>
</feature>
<feature type="turn" evidence="5">
    <location>
        <begin position="195"/>
        <end position="197"/>
    </location>
</feature>
<feature type="helix" evidence="5">
    <location>
        <begin position="221"/>
        <end position="223"/>
    </location>
</feature>
<feature type="helix" evidence="5">
    <location>
        <begin position="227"/>
        <end position="232"/>
    </location>
</feature>
<comment type="function">
    <text evidence="1 3">Has a role in maintaining cell viability during stationary phase induced by stress response (PubMed:11751918). May be involved in pre-mRNA splicing.</text>
</comment>
<comment type="subunit">
    <text evidence="3">Heterodimer with ish1.</text>
</comment>
<comment type="interaction">
    <interactant intactId="EBI-1559662">
        <id>O59793</id>
    </interactant>
    <interactant intactId="EBI-1559673">
        <id>Q9Y7X6</id>
        <label>ish1</label>
    </interactant>
    <organismsDiffer>false</organismsDiffer>
    <experiments>4</experiments>
</comment>
<comment type="subcellular location">
    <subcellularLocation>
        <location evidence="3">Nucleus</location>
    </subcellularLocation>
    <subcellularLocation>
        <location evidence="3">Cytoplasm</location>
        <location evidence="3">Cytoskeleton</location>
        <location evidence="3">Spindle</location>
    </subcellularLocation>
    <text>During mitosis associates with the spindle microtubules.</text>
</comment>
<comment type="similarity">
    <text evidence="4">Belongs to the ESS2 family.</text>
</comment>
<name>ESS2_SCHPO</name>
<accession>O59793</accession>
<proteinExistence type="evidence at protein level"/>
<dbReference type="EMBL" id="CU329672">
    <property type="protein sequence ID" value="CAA18284.1"/>
    <property type="molecule type" value="Genomic_DNA"/>
</dbReference>
<dbReference type="PIR" id="T41334">
    <property type="entry name" value="T41334"/>
</dbReference>
<dbReference type="RefSeq" id="NP_587842.1">
    <property type="nucleotide sequence ID" value="NM_001022835.2"/>
</dbReference>
<dbReference type="PDB" id="9ESI">
    <property type="method" value="EM"/>
    <property type="resolution" value="3.10 A"/>
    <property type="chains" value="e=1-384"/>
</dbReference>
<dbReference type="PDBsum" id="9ESI"/>
<dbReference type="EMDB" id="EMD-19942"/>
<dbReference type="SMR" id="O59793"/>
<dbReference type="BioGRID" id="275368">
    <property type="interactions" value="46"/>
</dbReference>
<dbReference type="FunCoup" id="O59793">
    <property type="interactions" value="104"/>
</dbReference>
<dbReference type="IntAct" id="O59793">
    <property type="interactions" value="24"/>
</dbReference>
<dbReference type="STRING" id="284812.O59793"/>
<dbReference type="iPTMnet" id="O59793"/>
<dbReference type="PaxDb" id="4896-SPCC364.02c.1"/>
<dbReference type="EnsemblFungi" id="SPCC364.02c.1">
    <property type="protein sequence ID" value="SPCC364.02c.1:pep"/>
    <property type="gene ID" value="SPCC364.02c"/>
</dbReference>
<dbReference type="GeneID" id="2538787"/>
<dbReference type="KEGG" id="spo:2538787"/>
<dbReference type="PomBase" id="SPCC364.02c">
    <property type="gene designation" value="bis1"/>
</dbReference>
<dbReference type="VEuPathDB" id="FungiDB:SPCC364.02c"/>
<dbReference type="eggNOG" id="KOG2627">
    <property type="taxonomic scope" value="Eukaryota"/>
</dbReference>
<dbReference type="HOGENOM" id="CLU_719929_0_0_1"/>
<dbReference type="InParanoid" id="O59793"/>
<dbReference type="OMA" id="IAWKERP"/>
<dbReference type="PhylomeDB" id="O59793"/>
<dbReference type="PRO" id="PR:O59793"/>
<dbReference type="Proteomes" id="UP000002485">
    <property type="component" value="Chromosome III"/>
</dbReference>
<dbReference type="GO" id="GO:0071013">
    <property type="term" value="C:catalytic step 2 spliceosome"/>
    <property type="evidence" value="ECO:0000318"/>
    <property type="project" value="GO_Central"/>
</dbReference>
<dbReference type="GO" id="GO:0005737">
    <property type="term" value="C:cytoplasm"/>
    <property type="evidence" value="ECO:0007669"/>
    <property type="project" value="UniProtKB-KW"/>
</dbReference>
<dbReference type="GO" id="GO:0005874">
    <property type="term" value="C:microtubule"/>
    <property type="evidence" value="ECO:0007669"/>
    <property type="project" value="UniProtKB-KW"/>
</dbReference>
<dbReference type="GO" id="GO:0005634">
    <property type="term" value="C:nucleus"/>
    <property type="evidence" value="ECO:0000314"/>
    <property type="project" value="PomBase"/>
</dbReference>
<dbReference type="GO" id="GO:0071014">
    <property type="term" value="C:post-mRNA release spliceosomal complex"/>
    <property type="evidence" value="ECO:0000314"/>
    <property type="project" value="PomBase"/>
</dbReference>
<dbReference type="GO" id="GO:0005819">
    <property type="term" value="C:spindle"/>
    <property type="evidence" value="ECO:0007669"/>
    <property type="project" value="UniProtKB-SubCell"/>
</dbReference>
<dbReference type="GO" id="GO:0045292">
    <property type="term" value="P:mRNA cis splicing, via spliceosome"/>
    <property type="evidence" value="ECO:0000266"/>
    <property type="project" value="PomBase"/>
</dbReference>
<dbReference type="InterPro" id="IPR019148">
    <property type="entry name" value="Nuclear_protein_DGCR14_ESS-2"/>
</dbReference>
<dbReference type="PANTHER" id="PTHR12940">
    <property type="entry name" value="ES-2 PROTEIN - RELATED"/>
    <property type="match status" value="1"/>
</dbReference>
<dbReference type="PANTHER" id="PTHR12940:SF0">
    <property type="entry name" value="SPLICING FACTOR ESS-2 HOMOLOG"/>
    <property type="match status" value="1"/>
</dbReference>
<dbReference type="Pfam" id="PF09751">
    <property type="entry name" value="Es2"/>
    <property type="match status" value="1"/>
</dbReference>
<gene>
    <name type="primary">bis1</name>
    <name type="ORF">SPCC364.02c</name>
</gene>